<reference key="1">
    <citation type="journal article" date="2001" name="Cell. Mol. Life Sci.">
        <title>Porcine factor V: cDNA cloning, gene mapping, three-dimensional protein modeling of membrane binding sites and comparative anatomy of domains.</title>
        <authorList>
            <person name="Grimm D.R."/>
            <person name="Colter M.B."/>
            <person name="Braunschweig M."/>
            <person name="Alexander L.J."/>
            <person name="Neame P.J."/>
            <person name="Kim H.K.W."/>
        </authorList>
    </citation>
    <scope>NUCLEOTIDE SEQUENCE [MRNA]</scope>
    <scope>3D-STRUCTURE MODELING OF F5/8 TYPE A AND C DOMAINS</scope>
    <source>
        <tissue>Liver</tissue>
    </source>
</reference>
<protein>
    <recommendedName>
        <fullName>Coagulation factor V</fullName>
    </recommendedName>
    <alternativeName>
        <fullName>Activated protein C cofactor</fullName>
    </alternativeName>
    <component>
        <recommendedName>
            <fullName>Coagulation factor V heavy chain</fullName>
        </recommendedName>
    </component>
    <component>
        <recommendedName>
            <fullName>Coagulation factor V light chain</fullName>
        </recommendedName>
    </component>
</protein>
<accession>Q9GLP1</accession>
<organism>
    <name type="scientific">Sus scrofa</name>
    <name type="common">Pig</name>
    <dbReference type="NCBI Taxonomy" id="9823"/>
    <lineage>
        <taxon>Eukaryota</taxon>
        <taxon>Metazoa</taxon>
        <taxon>Chordata</taxon>
        <taxon>Craniata</taxon>
        <taxon>Vertebrata</taxon>
        <taxon>Euteleostomi</taxon>
        <taxon>Mammalia</taxon>
        <taxon>Eutheria</taxon>
        <taxon>Laurasiatheria</taxon>
        <taxon>Artiodactyla</taxon>
        <taxon>Suina</taxon>
        <taxon>Suidae</taxon>
        <taxon>Sus</taxon>
    </lineage>
</organism>
<dbReference type="EMBL" id="AF191308">
    <property type="protein sequence ID" value="AAG28381.1"/>
    <property type="molecule type" value="mRNA"/>
</dbReference>
<dbReference type="RefSeq" id="NP_999285.1">
    <property type="nucleotide sequence ID" value="NM_214120.1"/>
</dbReference>
<dbReference type="SMR" id="Q9GLP1"/>
<dbReference type="FunCoup" id="Q9GLP1">
    <property type="interactions" value="107"/>
</dbReference>
<dbReference type="STRING" id="9823.ENSSSCP00000006704"/>
<dbReference type="GlyCosmos" id="Q9GLP1">
    <property type="glycosylation" value="28 sites, No reported glycans"/>
</dbReference>
<dbReference type="GlyGen" id="Q9GLP1">
    <property type="glycosylation" value="28 sites"/>
</dbReference>
<dbReference type="PaxDb" id="9823-ENSSSCP00000006704"/>
<dbReference type="PeptideAtlas" id="Q9GLP1"/>
<dbReference type="GeneID" id="397217"/>
<dbReference type="KEGG" id="ssc:397217"/>
<dbReference type="CTD" id="2153"/>
<dbReference type="eggNOG" id="ENOG502QSUG">
    <property type="taxonomic scope" value="Eukaryota"/>
</dbReference>
<dbReference type="InParanoid" id="Q9GLP1"/>
<dbReference type="OrthoDB" id="2121828at2759"/>
<dbReference type="Proteomes" id="UP000008227">
    <property type="component" value="Unplaced"/>
</dbReference>
<dbReference type="Proteomes" id="UP000314985">
    <property type="component" value="Unplaced"/>
</dbReference>
<dbReference type="Proteomes" id="UP000694570">
    <property type="component" value="Unplaced"/>
</dbReference>
<dbReference type="Proteomes" id="UP000694571">
    <property type="component" value="Unplaced"/>
</dbReference>
<dbReference type="Proteomes" id="UP000694720">
    <property type="component" value="Unplaced"/>
</dbReference>
<dbReference type="Proteomes" id="UP000694722">
    <property type="component" value="Unplaced"/>
</dbReference>
<dbReference type="Proteomes" id="UP000694723">
    <property type="component" value="Unplaced"/>
</dbReference>
<dbReference type="Proteomes" id="UP000694724">
    <property type="component" value="Unplaced"/>
</dbReference>
<dbReference type="Proteomes" id="UP000694725">
    <property type="component" value="Unplaced"/>
</dbReference>
<dbReference type="Proteomes" id="UP000694726">
    <property type="component" value="Unplaced"/>
</dbReference>
<dbReference type="Proteomes" id="UP000694727">
    <property type="component" value="Unplaced"/>
</dbReference>
<dbReference type="Proteomes" id="UP000694728">
    <property type="component" value="Unplaced"/>
</dbReference>
<dbReference type="GO" id="GO:0005576">
    <property type="term" value="C:extracellular region"/>
    <property type="evidence" value="ECO:0007669"/>
    <property type="project" value="UniProtKB-SubCell"/>
</dbReference>
<dbReference type="GO" id="GO:0031091">
    <property type="term" value="C:platelet alpha granule"/>
    <property type="evidence" value="ECO:0000318"/>
    <property type="project" value="GO_Central"/>
</dbReference>
<dbReference type="GO" id="GO:0005507">
    <property type="term" value="F:copper ion binding"/>
    <property type="evidence" value="ECO:0007669"/>
    <property type="project" value="InterPro"/>
</dbReference>
<dbReference type="GO" id="GO:0008015">
    <property type="term" value="P:blood circulation"/>
    <property type="evidence" value="ECO:0000318"/>
    <property type="project" value="GO_Central"/>
</dbReference>
<dbReference type="GO" id="GO:0007596">
    <property type="term" value="P:blood coagulation"/>
    <property type="evidence" value="ECO:0000318"/>
    <property type="project" value="GO_Central"/>
</dbReference>
<dbReference type="CDD" id="cd14453">
    <property type="entry name" value="CuRO_2_FV_like"/>
    <property type="match status" value="1"/>
</dbReference>
<dbReference type="CDD" id="cd14450">
    <property type="entry name" value="CuRO_3_FV_like"/>
    <property type="match status" value="1"/>
</dbReference>
<dbReference type="CDD" id="cd14454">
    <property type="entry name" value="CuRO_4_FV_like"/>
    <property type="match status" value="1"/>
</dbReference>
<dbReference type="CDD" id="cd00057">
    <property type="entry name" value="FA58C"/>
    <property type="match status" value="2"/>
</dbReference>
<dbReference type="FunFam" id="2.60.40.420:FF:000056">
    <property type="entry name" value="Coagulation factor V"/>
    <property type="match status" value="1"/>
</dbReference>
<dbReference type="FunFam" id="2.60.40.420:FF:000050">
    <property type="entry name" value="coagulation factor V isoform X1"/>
    <property type="match status" value="1"/>
</dbReference>
<dbReference type="FunFam" id="2.60.40.420:FF:000068">
    <property type="entry name" value="coagulation factor V isoform X1"/>
    <property type="match status" value="1"/>
</dbReference>
<dbReference type="FunFam" id="2.60.120.260:FF:000002">
    <property type="entry name" value="Coagulation factor VIII"/>
    <property type="match status" value="2"/>
</dbReference>
<dbReference type="FunFam" id="2.60.40.420:FF:000011">
    <property type="entry name" value="Coagulation factor VIII (Predicted)"/>
    <property type="match status" value="2"/>
</dbReference>
<dbReference type="Gene3D" id="2.60.40.420">
    <property type="entry name" value="Cupredoxins - blue copper proteins"/>
    <property type="match status" value="5"/>
</dbReference>
<dbReference type="Gene3D" id="2.60.120.260">
    <property type="entry name" value="Galactose-binding domain-like"/>
    <property type="match status" value="2"/>
</dbReference>
<dbReference type="InterPro" id="IPR009271">
    <property type="entry name" value="Coagulation_factor_V_LSPD"/>
</dbReference>
<dbReference type="InterPro" id="IPR011707">
    <property type="entry name" value="Cu-oxidase-like_N"/>
</dbReference>
<dbReference type="InterPro" id="IPR033138">
    <property type="entry name" value="Cu_oxidase_CS"/>
</dbReference>
<dbReference type="InterPro" id="IPR008972">
    <property type="entry name" value="Cupredoxin"/>
</dbReference>
<dbReference type="InterPro" id="IPR000421">
    <property type="entry name" value="FA58C"/>
</dbReference>
<dbReference type="InterPro" id="IPR024715">
    <property type="entry name" value="Factor_5/8-like"/>
</dbReference>
<dbReference type="InterPro" id="IPR008979">
    <property type="entry name" value="Galactose-bd-like_sf"/>
</dbReference>
<dbReference type="InterPro" id="IPR050633">
    <property type="entry name" value="Neuropilin_MCO_CoagFactor"/>
</dbReference>
<dbReference type="PANTHER" id="PTHR46806:SF10">
    <property type="entry name" value="COAGULATION FACTOR V"/>
    <property type="match status" value="1"/>
</dbReference>
<dbReference type="PANTHER" id="PTHR46806">
    <property type="entry name" value="F5/8 TYPE C DOMAIN-CONTAINING PROTEIN"/>
    <property type="match status" value="1"/>
</dbReference>
<dbReference type="Pfam" id="PF07732">
    <property type="entry name" value="Cu-oxidase_3"/>
    <property type="match status" value="2"/>
</dbReference>
<dbReference type="Pfam" id="PF00754">
    <property type="entry name" value="F5_F8_type_C"/>
    <property type="match status" value="2"/>
</dbReference>
<dbReference type="Pfam" id="PF06049">
    <property type="entry name" value="LSPR"/>
    <property type="match status" value="36"/>
</dbReference>
<dbReference type="PIRSF" id="PIRSF000354">
    <property type="entry name" value="Factors_V_VIII"/>
    <property type="match status" value="1"/>
</dbReference>
<dbReference type="SMART" id="SM00231">
    <property type="entry name" value="FA58C"/>
    <property type="match status" value="2"/>
</dbReference>
<dbReference type="SUPFAM" id="SSF49503">
    <property type="entry name" value="Cupredoxins"/>
    <property type="match status" value="6"/>
</dbReference>
<dbReference type="SUPFAM" id="SSF49785">
    <property type="entry name" value="Galactose-binding domain-like"/>
    <property type="match status" value="2"/>
</dbReference>
<dbReference type="PROSITE" id="PS01285">
    <property type="entry name" value="FA58C_1"/>
    <property type="match status" value="2"/>
</dbReference>
<dbReference type="PROSITE" id="PS01286">
    <property type="entry name" value="FA58C_2"/>
    <property type="match status" value="2"/>
</dbReference>
<dbReference type="PROSITE" id="PS50022">
    <property type="entry name" value="FA58C_3"/>
    <property type="match status" value="2"/>
</dbReference>
<dbReference type="PROSITE" id="PS00079">
    <property type="entry name" value="MULTICOPPER_OXIDASE1"/>
    <property type="match status" value="2"/>
</dbReference>
<comment type="function">
    <text>Coagulation factor V is a cofactor that participates with factor Xa to activate prothrombin to thrombin.</text>
</comment>
<comment type="activity regulation">
    <text evidence="1">Inhibited by SERPINA5.</text>
</comment>
<comment type="subunit">
    <text evidence="1">Factor Va, the activated form of factor V, is composed of a heavy chain and a light chain, non-covalently bound. The interaction between the two chains is calcium-dependent. Forms heterodimer with SERPINA5 (By similarity).</text>
</comment>
<comment type="subcellular location">
    <subcellularLocation>
        <location evidence="1">Secreted</location>
    </subcellularLocation>
</comment>
<comment type="domain">
    <text>Domain B contains 41 X 9 AA tandem repeats. Domains C1 and C2 may be involved in membrane binding.</text>
</comment>
<comment type="PTM">
    <text>Thrombin activates factor V proteolytically to the active cofactor, factor Va (formation of a heavy chain at the N-terminus and a light chain at the C-terminus).</text>
</comment>
<comment type="similarity">
    <text evidence="6">Belongs to the multicopper oxidase family.</text>
</comment>
<sequence>MFPALPCPWVLVVLGTSWAAWGNLGTEAARVRQFYVAAQSISWNYHPEPTHPSSSPFATSFKKIVYREYEAYFQKEKPPSRMSGLLGPTLYADVGDIMKVHFRNKADKPLSIHPQGIKYSKFAEGASYPDHTFLVEKMDDAVAPGQEYTYEWNISEDSGPTHNDPPCLTHIYYSYENLIQDFNSGLIGPLLICKKGTLTEDGIQKMFDKQYVLMFAVFDESKSWNQSSSLMYTVNGYVNGTMPDITVCAYDHISWHLIGMSSGPELFSIHFSGQVLEQNHHKVSAITLVSATSTTANMTVSPEGKWPISSLIPKHFQAGMQAYIDIKNCAKKTRKPKKLTRDQRRHIKRWEYFIAAEEVIWDYAPIIPANMDKKYRSLHLDNFSNQIGKHYKKVVYKQYQDESFTKRLENPNNKEDGILGPVIRAQVRDTLKIVFKNMASRSYSIYPHGVTFSPYEDDVNSSSTSDNNTMIRAVQPGETYTYKWNILESDEPTENDAQCLTRPYYSNVDITRDIASGLIGLLLICKSRSLDKRGIQRTADIEQKAVFAVFDENKSWYIEDNIYKFCENPEKVKRDDPKFYESNIMSTINGYVPESIPTLGFCFDDTVQWHFCSVRTHDNILTIHFTGHSFIYGKRHEDTLTLFPMRGESVTVTMDNVGTWMLTTMNSNPRNKKLQLKFRDVKCIRDDDEDSYEIIYEPSSSTTLTTRKMHDSSENKEEENDDEYDYQDLLASVLGIRSFRNSSLYQEDDEFNLTALALENNSEFIPPSTDRAVDSNSSSPGNISRAPANTFTEPRKILPHPEATKAGSPRRHTGLVKNLVLNRRRTQHSDPYSEDPIENPLQSVITGISLLPFGTEGFRNREHPKHKRFKAGRDQAAKHRFSQMEFPAHKTGRHISQDNSSSSSMGPLEDLSSDLLLLERKDPSTINGKWHLVSEKGSYEIVQDADEDMAVNKLPNNPQNASRSWGENIPFTNKHGKQRGHPIFVTRHKLLQERQDEGNSILKKGRFFIRTRRKKKERKPVHHVPLSPRSFNPLRGEANTPFSDRRQNHSLLLHESNETFPPTDLNQTFPSMNLSLIASHPDHNQNLPNDTHQTSSPLDLYQTVTPDEPYQTAPIQDLDPTHSTAVPSHQSSLPEPIQMHDYDLRNKASPTDVSEMFFSLKLKAGHRTTSPDLNQTSLSPELSQTTLSPDPGHVTLSPDLSQTTLSPDLSHTTLSPDLGHTTLSPDLSHTTLSPDLSQTTLSPDLSHTTLSPDLGHTTLSPDLSHTTLSPDLGHATLSPDLSHTTLSPDLGHTTLSPDLGHTTLSPDFSQTTLSPDLGHTTLSSDVSHTTLSPDLSHTTLSPDLSHTTLSPDLGHTTLSPDLSQTTLSPDLGHMTLSPDLSHTTLSPDLGHTTLSPDLSHTTLSPDLGHMTLSPDLGQTTLSLDFGQTTLSPDLSHMTLSSELSHETLSPDLSQVTLSPDLSEIPFSPDLWQTTLSSDLNETTLSPDLRQTSPHPDPDKTSYISESSQSVTLPEFGQTSPFPDLGQRPSPPSHSTLNNTFIPREFNPMVVVGLSRDDGDYVEIIPRQQEENSEEDYVKIDYVEYDDPYQTDVRTDINSSRNPDNIAAWYLRSNNGNRRNYYIAAEELSWDYSKFTQREDIDDVPEHTIYKKVVFRKYLDSTFTKLDPRGEYEEHLGILGPIIRAEVDDVIQVRFKNLASRPYSLHAHGLSYEKSSEGKTYEDDSPEWFKEDNAVQPNSSYTYVWHATERSGPESPGSACRAWAYYSAVNPEKDIHSGLIGPLLICRKGTLHKENNMPVDMREFVLLFMVFDEKKSWYYEKKFTRSWRLTSSEVKNSHKFHAINGMIYNLPGLRMYEQEWVRLHLLNLGGSRDIHVVHFHGQTLLENGTQQHQLGVWPLLPGSFKTLEMKTSKAGWWLLDTEVGENQRAGMQTPFLIIDRECKMPMGLSTGLIADSQIKASEFWGHWQPKLARLNNGGSYNAWITDKFSGESNSKPWIQVDMQREVVFTGIQTQGAKYYLKSYYTTEFNVAYSSDQRNWRIFKGNSTKNVMYFNGNSDASTITENQFDPPVVARYIRISPTESYNKPALRLELQGCEVNGCSTPLGMESGNIKNEQITASSFKKSWWGDYWEPFRARLNAQGRVNAWQAKANNNNQWLQIDLLKIKKITAITTQGCKSLSSEMYVKRYTIQYSDRGVEWKSYREKSSMVDKIFEGNNNIKGHVKNFFNPPIISRFIRIIPKMWNQSIALRLELFGCDIY</sequence>
<keyword id="KW-0094">Blood coagulation</keyword>
<keyword id="KW-0106">Calcium</keyword>
<keyword id="KW-0186">Copper</keyword>
<keyword id="KW-1015">Disulfide bond</keyword>
<keyword id="KW-0325">Glycoprotein</keyword>
<keyword id="KW-0356">Hemostasis</keyword>
<keyword id="KW-0479">Metal-binding</keyword>
<keyword id="KW-0597">Phosphoprotein</keyword>
<keyword id="KW-1185">Reference proteome</keyword>
<keyword id="KW-0677">Repeat</keyword>
<keyword id="KW-0964">Secreted</keyword>
<keyword id="KW-0732">Signal</keyword>
<keyword id="KW-0765">Sulfation</keyword>
<keyword id="KW-0865">Zymogen</keyword>
<feature type="signal peptide" evidence="3">
    <location>
        <begin position="1"/>
        <end position="22"/>
    </location>
</feature>
<feature type="chain" id="PRO_0000002982" description="Coagulation factor V">
    <location>
        <begin position="23"/>
        <end position="2258"/>
    </location>
</feature>
<feature type="chain" id="PRO_0000002983" description="Coagulation factor V heavy chain" evidence="1">
    <location>
        <begin position="23"/>
        <end position="737"/>
    </location>
</feature>
<feature type="propeptide" id="PRO_0000002984" description="Activation peptide (connecting region)" evidence="1">
    <location>
        <begin position="738"/>
        <end position="1611"/>
    </location>
</feature>
<feature type="chain" id="PRO_0000002985" description="Coagulation factor V light chain" evidence="1">
    <location>
        <begin position="1612"/>
        <end position="2258"/>
    </location>
</feature>
<feature type="domain" description="F5/8 type A 1">
    <location>
        <begin position="30"/>
        <end position="329"/>
    </location>
</feature>
<feature type="domain" description="Plastocyanin-like 1">
    <location>
        <begin position="30"/>
        <end position="193"/>
    </location>
</feature>
<feature type="domain" description="Plastocyanin-like 2">
    <location>
        <begin position="203"/>
        <end position="329"/>
    </location>
</feature>
<feature type="domain" description="F5/8 type A 2">
    <location>
        <begin position="348"/>
        <end position="683"/>
    </location>
</feature>
<feature type="domain" description="Plastocyanin-like 3">
    <location>
        <begin position="348"/>
        <end position="525"/>
    </location>
</feature>
<feature type="domain" description="Plastocyanin-like 4">
    <location>
        <begin position="535"/>
        <end position="683"/>
    </location>
</feature>
<feature type="repeat" description="1">
    <location>
        <begin position="1168"/>
        <end position="1176"/>
    </location>
</feature>
<feature type="repeat" description="2">
    <location>
        <begin position="1177"/>
        <end position="1185"/>
    </location>
</feature>
<feature type="repeat" description="3">
    <location>
        <begin position="1186"/>
        <end position="1194"/>
    </location>
</feature>
<feature type="repeat" description="4">
    <location>
        <begin position="1195"/>
        <end position="1203"/>
    </location>
</feature>
<feature type="repeat" description="5">
    <location>
        <begin position="1204"/>
        <end position="1212"/>
    </location>
</feature>
<feature type="repeat" description="6">
    <location>
        <begin position="1213"/>
        <end position="1221"/>
    </location>
</feature>
<feature type="repeat" description="7">
    <location>
        <begin position="1222"/>
        <end position="1230"/>
    </location>
</feature>
<feature type="repeat" description="8">
    <location>
        <begin position="1231"/>
        <end position="1239"/>
    </location>
</feature>
<feature type="repeat" description="9">
    <location>
        <begin position="1240"/>
        <end position="1248"/>
    </location>
</feature>
<feature type="repeat" description="10">
    <location>
        <begin position="1249"/>
        <end position="1257"/>
    </location>
</feature>
<feature type="repeat" description="11">
    <location>
        <begin position="1258"/>
        <end position="1266"/>
    </location>
</feature>
<feature type="repeat" description="12">
    <location>
        <begin position="1267"/>
        <end position="1275"/>
    </location>
</feature>
<feature type="repeat" description="13">
    <location>
        <begin position="1276"/>
        <end position="1284"/>
    </location>
</feature>
<feature type="repeat" description="14">
    <location>
        <begin position="1285"/>
        <end position="1293"/>
    </location>
</feature>
<feature type="repeat" description="15">
    <location>
        <begin position="1294"/>
        <end position="1302"/>
    </location>
</feature>
<feature type="repeat" description="16">
    <location>
        <begin position="1303"/>
        <end position="1311"/>
    </location>
</feature>
<feature type="repeat" description="17">
    <location>
        <begin position="1312"/>
        <end position="1320"/>
    </location>
</feature>
<feature type="repeat" description="18">
    <location>
        <begin position="1321"/>
        <end position="1329"/>
    </location>
</feature>
<feature type="repeat" description="19">
    <location>
        <begin position="1330"/>
        <end position="1338"/>
    </location>
</feature>
<feature type="repeat" description="20">
    <location>
        <begin position="1339"/>
        <end position="1347"/>
    </location>
</feature>
<feature type="repeat" description="21">
    <location>
        <begin position="1348"/>
        <end position="1356"/>
    </location>
</feature>
<feature type="repeat" description="22">
    <location>
        <begin position="1357"/>
        <end position="1365"/>
    </location>
</feature>
<feature type="repeat" description="23">
    <location>
        <begin position="1366"/>
        <end position="1374"/>
    </location>
</feature>
<feature type="repeat" description="24">
    <location>
        <begin position="1375"/>
        <end position="1383"/>
    </location>
</feature>
<feature type="repeat" description="25">
    <location>
        <begin position="1384"/>
        <end position="1392"/>
    </location>
</feature>
<feature type="repeat" description="26">
    <location>
        <begin position="1393"/>
        <end position="1401"/>
    </location>
</feature>
<feature type="repeat" description="27">
    <location>
        <begin position="1402"/>
        <end position="1410"/>
    </location>
</feature>
<feature type="repeat" description="28">
    <location>
        <begin position="1411"/>
        <end position="1419"/>
    </location>
</feature>
<feature type="repeat" description="29">
    <location>
        <begin position="1420"/>
        <end position="1428"/>
    </location>
</feature>
<feature type="repeat" description="30">
    <location>
        <begin position="1429"/>
        <end position="1437"/>
    </location>
</feature>
<feature type="repeat" description="31">
    <location>
        <begin position="1438"/>
        <end position="1446"/>
    </location>
</feature>
<feature type="repeat" description="32">
    <location>
        <begin position="1447"/>
        <end position="1455"/>
    </location>
</feature>
<feature type="repeat" description="33">
    <location>
        <begin position="1456"/>
        <end position="1464"/>
    </location>
</feature>
<feature type="repeat" description="34">
    <location>
        <begin position="1465"/>
        <end position="1473"/>
    </location>
</feature>
<feature type="repeat" description="35">
    <location>
        <begin position="1474"/>
        <end position="1482"/>
    </location>
</feature>
<feature type="repeat" description="36">
    <location>
        <begin position="1483"/>
        <end position="1491"/>
    </location>
</feature>
<feature type="repeat" description="37">
    <location>
        <begin position="1492"/>
        <end position="1500"/>
    </location>
</feature>
<feature type="repeat" description="38">
    <location>
        <begin position="1501"/>
        <end position="1509"/>
    </location>
</feature>
<feature type="repeat" description="39">
    <location>
        <begin position="1510"/>
        <end position="1518"/>
    </location>
</feature>
<feature type="repeat" description="40">
    <location>
        <begin position="1519"/>
        <end position="1527"/>
    </location>
</feature>
<feature type="repeat" description="41">
    <location>
        <begin position="1531"/>
        <end position="1539"/>
    </location>
</feature>
<feature type="domain" description="F5/8 type A 3">
    <location>
        <begin position="1616"/>
        <end position="1941"/>
    </location>
</feature>
<feature type="domain" description="Plastocyanin-like 5">
    <location>
        <begin position="1616"/>
        <end position="1785"/>
    </location>
</feature>
<feature type="domain" description="Plastocyanin-like 6">
    <location>
        <begin position="1795"/>
        <end position="1941"/>
    </location>
</feature>
<feature type="domain" description="F5/8 type C 1" evidence="4">
    <location>
        <begin position="1941"/>
        <end position="2095"/>
    </location>
</feature>
<feature type="domain" description="F5/8 type C 2" evidence="4">
    <location>
        <begin position="2100"/>
        <end position="2255"/>
    </location>
</feature>
<feature type="region of interest" description="B">
    <location>
        <begin position="691"/>
        <end position="1611"/>
    </location>
</feature>
<feature type="region of interest" description="Disordered" evidence="5">
    <location>
        <begin position="703"/>
        <end position="723"/>
    </location>
</feature>
<feature type="region of interest" description="Disordered" evidence="5">
    <location>
        <begin position="764"/>
        <end position="790"/>
    </location>
</feature>
<feature type="region of interest" description="Disordered" evidence="5">
    <location>
        <begin position="1013"/>
        <end position="1035"/>
    </location>
</feature>
<feature type="region of interest" description="Disordered" evidence="5">
    <location>
        <begin position="1167"/>
        <end position="1240"/>
    </location>
</feature>
<feature type="region of interest" description="41 X 9 AA approximate tandem repeats of T-L-S-P-D-L-[GS]-[HQ]-T">
    <location>
        <begin position="1168"/>
        <end position="1539"/>
    </location>
</feature>
<feature type="region of interest" description="Disordered" evidence="5">
    <location>
        <begin position="1252"/>
        <end position="1334"/>
    </location>
</feature>
<feature type="region of interest" description="Disordered" evidence="5">
    <location>
        <begin position="1482"/>
        <end position="1539"/>
    </location>
</feature>
<feature type="compositionally biased region" description="Polar residues" evidence="5">
    <location>
        <begin position="774"/>
        <end position="790"/>
    </location>
</feature>
<feature type="compositionally biased region" description="Basic residues" evidence="5">
    <location>
        <begin position="1013"/>
        <end position="1022"/>
    </location>
</feature>
<feature type="compositionally biased region" description="Polar residues" evidence="5">
    <location>
        <begin position="1167"/>
        <end position="1188"/>
    </location>
</feature>
<feature type="compositionally biased region" description="Polar residues" evidence="5">
    <location>
        <begin position="1198"/>
        <end position="1240"/>
    </location>
</feature>
<feature type="compositionally biased region" description="Polar residues" evidence="5">
    <location>
        <begin position="1252"/>
        <end position="1269"/>
    </location>
</feature>
<feature type="compositionally biased region" description="Polar residues" evidence="5">
    <location>
        <begin position="1302"/>
        <end position="1334"/>
    </location>
</feature>
<feature type="compositionally biased region" description="Polar residues" evidence="5">
    <location>
        <begin position="1482"/>
        <end position="1493"/>
    </location>
</feature>
<feature type="compositionally biased region" description="Polar residues" evidence="5">
    <location>
        <begin position="1501"/>
        <end position="1520"/>
    </location>
</feature>
<feature type="binding site" evidence="1">
    <location>
        <position position="139"/>
    </location>
    <ligand>
        <name>Ca(2+)</name>
        <dbReference type="ChEBI" id="CHEBI:29108"/>
    </ligand>
</feature>
<feature type="binding site" evidence="1">
    <location>
        <position position="140"/>
    </location>
    <ligand>
        <name>Ca(2+)</name>
        <dbReference type="ChEBI" id="CHEBI:29108"/>
    </ligand>
</feature>
<feature type="binding site" evidence="1">
    <location>
        <position position="1877"/>
    </location>
    <ligand>
        <name>Cu cation</name>
        <dbReference type="ChEBI" id="CHEBI:23378"/>
    </ligand>
</feature>
<feature type="binding site" evidence="1">
    <location>
        <position position="1879"/>
    </location>
    <ligand>
        <name>Cu cation</name>
        <dbReference type="ChEBI" id="CHEBI:23378"/>
    </ligand>
</feature>
<feature type="binding site" evidence="1">
    <location>
        <position position="1919"/>
    </location>
    <ligand>
        <name>Cu cation</name>
        <dbReference type="ChEBI" id="CHEBI:23378"/>
    </ligand>
</feature>
<feature type="site" description="Cleavage; by thrombin" evidence="1">
    <location>
        <begin position="737"/>
        <end position="738"/>
    </location>
</feature>
<feature type="site" description="Cleavage; by thrombin" evidence="1">
    <location>
        <begin position="1029"/>
        <end position="1030"/>
    </location>
</feature>
<feature type="site" description="Cleavage; by thrombin" evidence="1">
    <location>
        <begin position="1611"/>
        <end position="1612"/>
    </location>
</feature>
<feature type="modified residue" description="Phosphothreonine" evidence="2">
    <location>
        <position position="639"/>
    </location>
</feature>
<feature type="modified residue" description="Sulfotyrosine" evidence="3">
    <location>
        <position position="692"/>
    </location>
</feature>
<feature type="modified residue" description="Sulfotyrosine" evidence="3">
    <location>
        <position position="696"/>
    </location>
</feature>
<feature type="modified residue" description="Sulfotyrosine" evidence="3">
    <location>
        <position position="724"/>
    </location>
</feature>
<feature type="modified residue" description="Sulfotyrosine" evidence="3">
    <location>
        <position position="726"/>
    </location>
</feature>
<feature type="modified residue" description="Sulfotyrosine" evidence="3">
    <location>
        <position position="745"/>
    </location>
</feature>
<feature type="modified residue" description="Sulfotyrosine" evidence="3">
    <location>
        <position position="1560"/>
    </location>
</feature>
<feature type="modified residue" description="Sulfotyrosine" evidence="3">
    <location>
        <position position="1576"/>
    </location>
</feature>
<feature type="modified residue" description="Sulfotyrosine" evidence="3">
    <location>
        <position position="1581"/>
    </location>
</feature>
<feature type="modified residue" description="Sulfotyrosine" evidence="3">
    <location>
        <position position="1584"/>
    </location>
</feature>
<feature type="modified residue" description="Sulfotyrosine" evidence="3">
    <location>
        <position position="1588"/>
    </location>
</feature>
<feature type="modified residue" description="Sulfotyrosine" evidence="3">
    <location>
        <position position="1631"/>
    </location>
</feature>
<feature type="glycosylation site" description="N-linked (GlcNAc...) asparagine" evidence="3">
    <location>
        <position position="153"/>
    </location>
</feature>
<feature type="glycosylation site" description="N-linked (GlcNAc...) asparagine" evidence="3">
    <location>
        <position position="225"/>
    </location>
</feature>
<feature type="glycosylation site" description="N-linked (GlcNAc...) asparagine" evidence="3">
    <location>
        <position position="239"/>
    </location>
</feature>
<feature type="glycosylation site" description="N-linked (GlcNAc...) asparagine" evidence="3">
    <location>
        <position position="297"/>
    </location>
</feature>
<feature type="glycosylation site" description="N-linked (GlcNAc...) asparagine" evidence="3">
    <location>
        <position position="382"/>
    </location>
</feature>
<feature type="glycosylation site" description="N-linked (GlcNAc...) asparagine" evidence="3">
    <location>
        <position position="460"/>
    </location>
</feature>
<feature type="glycosylation site" description="N-linked (GlcNAc...) asparagine" evidence="3">
    <location>
        <position position="467"/>
    </location>
</feature>
<feature type="glycosylation site" description="N-linked (GlcNAc...) asparagine" evidence="3">
    <location>
        <position position="553"/>
    </location>
</feature>
<feature type="glycosylation site" description="N-linked (GlcNAc...) asparagine" evidence="3">
    <location>
        <position position="741"/>
    </location>
</feature>
<feature type="glycosylation site" description="N-linked (GlcNAc...) asparagine" evidence="3">
    <location>
        <position position="752"/>
    </location>
</feature>
<feature type="glycosylation site" description="N-linked (GlcNAc...) asparagine" evidence="3">
    <location>
        <position position="760"/>
    </location>
</feature>
<feature type="glycosylation site" description="N-linked (GlcNAc...) asparagine" evidence="3">
    <location>
        <position position="776"/>
    </location>
</feature>
<feature type="glycosylation site" description="N-linked (GlcNAc...) asparagine" evidence="3">
    <location>
        <position position="782"/>
    </location>
</feature>
<feature type="glycosylation site" description="N-linked (GlcNAc...) asparagine" evidence="3">
    <location>
        <position position="899"/>
    </location>
</feature>
<feature type="glycosylation site" description="N-linked (GlcNAc...) asparagine" evidence="3">
    <location>
        <position position="960"/>
    </location>
</feature>
<feature type="glycosylation site" description="N-linked (GlcNAc...) asparagine" evidence="3">
    <location>
        <position position="1048"/>
    </location>
</feature>
<feature type="glycosylation site" description="N-linked (GlcNAc...) asparagine" evidence="3">
    <location>
        <position position="1057"/>
    </location>
</feature>
<feature type="glycosylation site" description="N-linked (GlcNAc...) asparagine" evidence="3">
    <location>
        <position position="1066"/>
    </location>
</feature>
<feature type="glycosylation site" description="N-linked (GlcNAc...) asparagine" evidence="3">
    <location>
        <position position="1073"/>
    </location>
</feature>
<feature type="glycosylation site" description="N-linked (GlcNAc...) asparagine" evidence="3">
    <location>
        <position position="1089"/>
    </location>
</feature>
<feature type="glycosylation site" description="N-linked (GlcNAc...) asparagine" evidence="3">
    <location>
        <position position="1174"/>
    </location>
</feature>
<feature type="glycosylation site" description="N-linked (GlcNAc...) asparagine" evidence="3">
    <location>
        <position position="1480"/>
    </location>
</feature>
<feature type="glycosylation site" description="N-linked (GlcNAc...) asparagine" evidence="3">
    <location>
        <position position="1537"/>
    </location>
</feature>
<feature type="glycosylation site" description="N-linked (GlcNAc...) asparagine" evidence="3">
    <location>
        <position position="1597"/>
    </location>
</feature>
<feature type="glycosylation site" description="N-linked (GlcNAc...) asparagine" evidence="3">
    <location>
        <position position="1737"/>
    </location>
</feature>
<feature type="glycosylation site" description="N-linked (GlcNAc...) asparagine" evidence="3">
    <location>
        <position position="1886"/>
    </location>
</feature>
<feature type="glycosylation site" description="N-linked (GlcNAc...) asparagine" evidence="3">
    <location>
        <position position="2044"/>
    </location>
</feature>
<feature type="glycosylation site" description="N-linked (GlcNAc...) asparagine" evidence="3">
    <location>
        <position position="2243"/>
    </location>
</feature>
<feature type="disulfide bond" evidence="4">
    <location>
        <begin position="167"/>
        <end position="193"/>
    </location>
</feature>
<feature type="disulfide bond" evidence="4">
    <location>
        <begin position="248"/>
        <end position="329"/>
    </location>
</feature>
<feature type="disulfide bond" evidence="4">
    <location>
        <begin position="499"/>
        <end position="525"/>
    </location>
</feature>
<feature type="disulfide bond" evidence="4">
    <location>
        <begin position="602"/>
        <end position="683"/>
    </location>
</feature>
<feature type="disulfide bond" evidence="6">
    <location>
        <begin position="1759"/>
        <end position="1785"/>
    </location>
</feature>
<feature type="disulfide bond" evidence="4">
    <location>
        <begin position="1941"/>
        <end position="2095"/>
    </location>
</feature>
<feature type="disulfide bond" evidence="4">
    <location>
        <begin position="2100"/>
        <end position="2255"/>
    </location>
</feature>
<name>FA5_PIG</name>
<proteinExistence type="evidence at transcript level"/>
<evidence type="ECO:0000250" key="1"/>
<evidence type="ECO:0000250" key="2">
    <source>
        <dbReference type="UniProtKB" id="P12259"/>
    </source>
</evidence>
<evidence type="ECO:0000255" key="3"/>
<evidence type="ECO:0000255" key="4">
    <source>
        <dbReference type="PROSITE-ProRule" id="PRU00081"/>
    </source>
</evidence>
<evidence type="ECO:0000256" key="5">
    <source>
        <dbReference type="SAM" id="MobiDB-lite"/>
    </source>
</evidence>
<evidence type="ECO:0000305" key="6"/>
<gene>
    <name type="primary">F5</name>
</gene>